<keyword id="KW-0002">3D-structure</keyword>
<keyword id="KW-0165">Cleavage on pair of basic residues</keyword>
<keyword id="KW-0903">Direct protein sequencing</keyword>
<keyword id="KW-1015">Disulfide bond</keyword>
<keyword id="KW-0325">Glycoprotein</keyword>
<keyword id="KW-0964">Secreted</keyword>
<keyword id="KW-0732">Signal</keyword>
<keyword id="KW-0800">Toxin</keyword>
<organism>
    <name type="scientific">Ustilago maydis P6 virus</name>
    <name type="common">UmV6</name>
    <name type="synonym">UmV-P6</name>
    <dbReference type="NCBI Taxonomy" id="11010"/>
    <lineage>
        <taxon>Viruses</taxon>
        <taxon>Riboviria</taxon>
        <taxon>Orthornavirae</taxon>
        <taxon>Duplornaviricota</taxon>
        <taxon>Chrymotiviricetes</taxon>
        <taxon>Ghabrivirales</taxon>
        <taxon>Totiviridae</taxon>
        <taxon>Totivirus</taxon>
    </lineage>
</organism>
<comment type="function">
    <text>This protein is lethal to sensitive cells of the same or related species. The KP6 alpha subunit is known to recognize some cellular receptors before interaction of the complex with KP6 beta, precipitating cell death.</text>
</comment>
<comment type="subunit">
    <text>Heterodimer of two small polypeptides that are not covalently linked.</text>
</comment>
<comment type="subcellular location">
    <subcellularLocation>
        <location>Secreted</location>
    </subcellularLocation>
</comment>
<comment type="miscellaneous">
    <text>The KP6 toxin polypeptides interact with the cell independently, as monomers.</text>
</comment>
<reference key="1">
    <citation type="journal article" date="1990" name="Mol. Cell. Biol.">
        <title>Ustilago maydis KP6 killer toxin: structure, expression in Saccharomyces cerevisiae, and relationship to other cellular toxins.</title>
        <authorList>
            <person name="Tao J."/>
            <person name="Ginsberg I."/>
            <person name="Banerjee N."/>
            <person name="Held W."/>
            <person name="Koltin Y."/>
            <person name="Bruenn J.A."/>
        </authorList>
    </citation>
    <scope>NUCLEOTIDE SEQUENCE</scope>
    <scope>PROTEIN SEQUENCE OF 28-61 AND 139-166</scope>
</reference>
<reference key="2">
    <citation type="journal article" date="1993" name="Mol. Gen. Genet.">
        <title>Mutants of Ustilago maydis defective in production of one of two polypeptides of KP6 toxin from the preprotoxin.</title>
        <authorList>
            <person name="Tao J."/>
            <person name="Ginzberg I."/>
            <person name="Koltin Y."/>
            <person name="Bruenn J.A."/>
        </authorList>
    </citation>
    <scope>NUCLEOTIDE SEQUENCE</scope>
    <source>
        <strain>NK13</strain>
        <strain>NK3</strain>
    </source>
</reference>
<reference key="3">
    <citation type="journal article" date="1999" name="J. Biol. Chem.">
        <title>Structure of Ustilago maydis killer toxin KP6 alpha-subunit. A multimeric assembly with a central pore.</title>
        <authorList>
            <person name="Li N."/>
            <person name="Erman M."/>
            <person name="Pangborn W."/>
            <person name="Duax W.L."/>
            <person name="Park C.M."/>
            <person name="Bruenn J."/>
            <person name="Ghosh D."/>
        </authorList>
    </citation>
    <scope>X-RAY CRYSTALLOGRAPHY (1.8 ANGSTROMS) OF 28-106</scope>
</reference>
<dbReference type="EMBL" id="M27418">
    <property type="protein sequence ID" value="AAA47957.1"/>
    <property type="molecule type" value="Genomic_RNA"/>
</dbReference>
<dbReference type="EMBL" id="S59589">
    <property type="protein sequence ID" value="AAB26391.1"/>
    <property type="molecule type" value="Other_RNA"/>
</dbReference>
<dbReference type="EMBL" id="S59590">
    <property type="protein sequence ID" value="AAB26392.1"/>
    <property type="molecule type" value="Other_RNA"/>
</dbReference>
<dbReference type="PIR" id="A34778">
    <property type="entry name" value="A34778"/>
</dbReference>
<dbReference type="PDB" id="1KP6">
    <property type="method" value="X-ray"/>
    <property type="resolution" value="1.80 A"/>
    <property type="chains" value="A=28-106"/>
</dbReference>
<dbReference type="PDB" id="4GVB">
    <property type="method" value="X-ray"/>
    <property type="resolution" value="1.80 A"/>
    <property type="chains" value="A=28-107, B=139-219"/>
</dbReference>
<dbReference type="PDBsum" id="1KP6"/>
<dbReference type="PDBsum" id="4GVB"/>
<dbReference type="SMR" id="P16948"/>
<dbReference type="GO" id="GO:0005576">
    <property type="term" value="C:extracellular region"/>
    <property type="evidence" value="ECO:0007669"/>
    <property type="project" value="UniProtKB-SubCell"/>
</dbReference>
<dbReference type="GO" id="GO:0090729">
    <property type="term" value="F:toxin activity"/>
    <property type="evidence" value="ECO:0007669"/>
    <property type="project" value="UniProtKB-KW"/>
</dbReference>
<dbReference type="CDD" id="cd22804">
    <property type="entry name" value="KP6_alpha"/>
    <property type="match status" value="1"/>
</dbReference>
<dbReference type="CDD" id="cd22805">
    <property type="entry name" value="KP6_beta"/>
    <property type="match status" value="1"/>
</dbReference>
<dbReference type="Gene3D" id="3.30.70.440">
    <property type="entry name" value="Killer toxin KP6 alpha-subunit"/>
    <property type="match status" value="2"/>
</dbReference>
<dbReference type="SUPFAM" id="SSF55056">
    <property type="entry name" value="Killer toxin KP6 alpha-subunit"/>
    <property type="match status" value="1"/>
</dbReference>
<name>KP6T_UMV6</name>
<feature type="signal peptide">
    <location>
        <begin position="1"/>
        <end position="19"/>
    </location>
</feature>
<feature type="propeptide" id="PRO_0000041339" evidence="3">
    <location>
        <begin position="20"/>
        <end position="27"/>
    </location>
</feature>
<feature type="chain" id="PRO_0000041340" description="KP6 killer toxin subunit alpha">
    <location>
        <begin position="28"/>
        <end position="105"/>
    </location>
</feature>
<feature type="propeptide" id="PRO_0000041341" evidence="3">
    <location>
        <begin position="106"/>
        <end position="138"/>
    </location>
</feature>
<feature type="chain" id="PRO_0000041342" description="KP6 killer toxin subunit beta">
    <location>
        <begin position="139"/>
        <end position="219"/>
    </location>
</feature>
<feature type="region of interest" description="Disordered" evidence="2">
    <location>
        <begin position="120"/>
        <end position="142"/>
    </location>
</feature>
<feature type="glycosylation site" description="N-linked (GlcNAc...) asparagine; by host" evidence="1">
    <location>
        <position position="98"/>
    </location>
</feature>
<feature type="disulfide bond">
    <location>
        <begin position="32"/>
        <end position="39"/>
    </location>
</feature>
<feature type="disulfide bond">
    <location>
        <begin position="43"/>
        <end position="101"/>
    </location>
</feature>
<feature type="disulfide bond">
    <location>
        <begin position="45"/>
        <end position="92"/>
    </location>
</feature>
<feature type="disulfide bond">
    <location>
        <begin position="62"/>
        <end position="78"/>
    </location>
</feature>
<feature type="sequence variant" description="In strain: NK3.">
    <original>C</original>
    <variation>R</variation>
    <location>
        <position position="78"/>
    </location>
</feature>
<feature type="sequence variant" description="In strain: NK13.">
    <original>T</original>
    <variation>P</variation>
    <location>
        <position position="163"/>
    </location>
</feature>
<feature type="sequence variant" description="In strain: NK13.">
    <original>K</original>
    <variation>R</variation>
    <location>
        <position position="180"/>
    </location>
</feature>
<feature type="helix" evidence="4">
    <location>
        <begin position="29"/>
        <end position="35"/>
    </location>
</feature>
<feature type="strand" evidence="4">
    <location>
        <begin position="40"/>
        <end position="46"/>
    </location>
</feature>
<feature type="turn" evidence="4">
    <location>
        <begin position="48"/>
        <end position="50"/>
    </location>
</feature>
<feature type="helix" evidence="4">
    <location>
        <begin position="55"/>
        <end position="59"/>
    </location>
</feature>
<feature type="helix" evidence="4">
    <location>
        <begin position="63"/>
        <end position="65"/>
    </location>
</feature>
<feature type="strand" evidence="4">
    <location>
        <begin position="69"/>
        <end position="72"/>
    </location>
</feature>
<feature type="turn" evidence="4">
    <location>
        <begin position="73"/>
        <end position="76"/>
    </location>
</feature>
<feature type="strand" evidence="4">
    <location>
        <begin position="77"/>
        <end position="82"/>
    </location>
</feature>
<feature type="helix" evidence="4">
    <location>
        <begin position="85"/>
        <end position="94"/>
    </location>
</feature>
<feature type="strand" evidence="4">
    <location>
        <begin position="98"/>
        <end position="103"/>
    </location>
</feature>
<feature type="strand" evidence="5">
    <location>
        <begin position="145"/>
        <end position="153"/>
    </location>
</feature>
<feature type="helix" evidence="5">
    <location>
        <begin position="154"/>
        <end position="156"/>
    </location>
</feature>
<feature type="helix" evidence="5">
    <location>
        <begin position="160"/>
        <end position="167"/>
    </location>
</feature>
<feature type="turn" evidence="5">
    <location>
        <begin position="179"/>
        <end position="181"/>
    </location>
</feature>
<feature type="helix" evidence="5">
    <location>
        <begin position="195"/>
        <end position="205"/>
    </location>
</feature>
<feature type="strand" evidence="5">
    <location>
        <begin position="206"/>
        <end position="214"/>
    </location>
</feature>
<feature type="helix" evidence="5">
    <location>
        <begin position="216"/>
        <end position="218"/>
    </location>
</feature>
<accession>P16948</accession>
<accession>Q02118</accession>
<accession>Q02120</accession>
<accession>Q08941</accession>
<proteinExistence type="evidence at protein level"/>
<sequence length="219" mass="24071">MLIFSVLMYLGLLLAGASALPNGLSPRNNAFCAGFGLSCKWECWCTAHGTGNELRYATAAGCGDHLSKSYYDARAGHCLFSDDLRNQFYSHCSSLNNNMSCRSLSKRTIQDSATDTVDLGAELHRDDPPPTASDIGKRGKRPRPVMCQCVDTTNGGVRLDAVTRAACSIDSFIDGYYTEKDGFCRAKYSWDLFTSGQFYQACLRYSHAGTNCQPDPQYE</sequence>
<evidence type="ECO:0000255" key="1"/>
<evidence type="ECO:0000256" key="2">
    <source>
        <dbReference type="SAM" id="MobiDB-lite"/>
    </source>
</evidence>
<evidence type="ECO:0000269" key="3">
    <source>
    </source>
</evidence>
<evidence type="ECO:0007829" key="4">
    <source>
        <dbReference type="PDB" id="1KP6"/>
    </source>
</evidence>
<evidence type="ECO:0007829" key="5">
    <source>
        <dbReference type="PDB" id="4GVB"/>
    </source>
</evidence>
<protein>
    <recommendedName>
        <fullName>KP6 killer toxin</fullName>
    </recommendedName>
    <alternativeName>
        <fullName>Killer protein 6</fullName>
    </alternativeName>
    <component>
        <recommendedName>
            <fullName>KP6 killer toxin subunit alpha</fullName>
        </recommendedName>
        <alternativeName>
            <fullName>VP10</fullName>
        </alternativeName>
    </component>
    <component>
        <recommendedName>
            <fullName>KP6 killer toxin subunit beta</fullName>
        </recommendedName>
        <alternativeName>
            <fullName>VP12.5</fullName>
        </alternativeName>
    </component>
</protein>
<organismHost>
    <name type="scientific">Mycosarcoma maydis</name>
    <name type="common">Corn smut fungus</name>
    <name type="synonym">Ustilago maydis</name>
    <dbReference type="NCBI Taxonomy" id="5270"/>
</organismHost>